<accession>O08398</accession>
<comment type="function">
    <text evidence="1 3">Essential cell division protein that forms a contractile ring structure (Z ring) at the future cell division site. The regulation of the ring assembly controls the timing and the location of cell division. One of the functions of the FtsZ ring is to recruit other cell division proteins to the septum to produce a new cell wall between the dividing cells. Binds GTP and shows GTPase activity.</text>
</comment>
<comment type="subunit">
    <text evidence="1 2">Homodimer. Polymerizes to form a dynamic ring structure in a strictly GTP-dependent manner. Interacts directly with several other division proteins (By similarity). Interacts with FtsA (PubMed:22473211).</text>
</comment>
<comment type="interaction">
    <interactant intactId="EBI-7808310">
        <id>O08398</id>
    </interactant>
    <interactant intactId="EBI-7808292">
        <id>Q9WZU0</id>
        <label>ftsA</label>
    </interactant>
    <organismsDiffer>false</organismsDiffer>
    <experiments>4</experiments>
</comment>
<comment type="subcellular location">
    <subcellularLocation>
        <location evidence="1">Cytoplasm</location>
    </subcellularLocation>
    <text evidence="1">Assembles at midcell at the inner surface of the cytoplasmic membrane.</text>
</comment>
<comment type="similarity">
    <text evidence="1">Belongs to the FtsZ family.</text>
</comment>
<sequence length="351" mass="38307">MGFDLDVEKKKENRNIPQANNLKIKVIGVGGAGNNAINRMIEIGIHGVEFVAVNTDLQVLEASNADVKIQIGENITRGLGAGGRPEIGEQAALESEEKIREVLQDTHMVFITAGFGGGTGTGASPVIAKIAKEMGILTVAIVTTPFYFEGPERLKKAIEGLKKLRKHVDTLIKISNNKLMEELPRDVKIKDAFLKADETLHQGVKGISELITKRGYINLDFADIESVMKDAGAAILGIGVGKGEHRAREAAKKAMESKLIEHPVENASSIVFNITAPSNIRMEEVHEAAMIIRQNSSEDADVKFGLIFDDEVPDDEIRVIFIATRFPDEDKILFPEGDIPAIYRYGLEGLL</sequence>
<gene>
    <name evidence="1" type="primary">ftsZ</name>
    <name type="ordered locus">TM_0836</name>
</gene>
<dbReference type="EMBL" id="U65944">
    <property type="protein sequence ID" value="AAC24604.1"/>
    <property type="molecule type" value="Genomic_DNA"/>
</dbReference>
<dbReference type="EMBL" id="AE000512">
    <property type="protein sequence ID" value="AAD35918.1"/>
    <property type="molecule type" value="Genomic_DNA"/>
</dbReference>
<dbReference type="PIR" id="H72328">
    <property type="entry name" value="H72328"/>
</dbReference>
<dbReference type="RefSeq" id="NP_228645.1">
    <property type="nucleotide sequence ID" value="NC_000853.1"/>
</dbReference>
<dbReference type="RefSeq" id="WP_004080800.1">
    <property type="nucleotide sequence ID" value="NZ_CP011107.1"/>
</dbReference>
<dbReference type="PDB" id="1W5F">
    <property type="method" value="X-ray"/>
    <property type="resolution" value="2.00 A"/>
    <property type="chains" value="A/B=1-351"/>
</dbReference>
<dbReference type="PDB" id="4A2A">
    <property type="method" value="X-ray"/>
    <property type="resolution" value="1.80 A"/>
    <property type="chains" value="C/D=336-351"/>
</dbReference>
<dbReference type="PDBsum" id="1W5F"/>
<dbReference type="PDBsum" id="4A2A"/>
<dbReference type="EMDB" id="EMD-2815"/>
<dbReference type="SMR" id="O08398"/>
<dbReference type="FunCoup" id="O08398">
    <property type="interactions" value="403"/>
</dbReference>
<dbReference type="IntAct" id="O08398">
    <property type="interactions" value="1"/>
</dbReference>
<dbReference type="MINT" id="O08398"/>
<dbReference type="STRING" id="243274.TM_0836"/>
<dbReference type="DrugBank" id="DB03532">
    <property type="generic name" value="Phosphomethylphosphonic acid guanylate ester"/>
</dbReference>
<dbReference type="PaxDb" id="243274-THEMA_00460"/>
<dbReference type="EnsemblBacteria" id="AAD35918">
    <property type="protein sequence ID" value="AAD35918"/>
    <property type="gene ID" value="TM_0836"/>
</dbReference>
<dbReference type="KEGG" id="tma:TM0836"/>
<dbReference type="KEGG" id="tmi:THEMA_00460"/>
<dbReference type="KEGG" id="tmm:Tmari_0838"/>
<dbReference type="KEGG" id="tmw:THMA_0857"/>
<dbReference type="eggNOG" id="COG0206">
    <property type="taxonomic scope" value="Bacteria"/>
</dbReference>
<dbReference type="InParanoid" id="O08398"/>
<dbReference type="OrthoDB" id="9813375at2"/>
<dbReference type="EvolutionaryTrace" id="O08398"/>
<dbReference type="Proteomes" id="UP000008183">
    <property type="component" value="Chromosome"/>
</dbReference>
<dbReference type="GO" id="GO:0032153">
    <property type="term" value="C:cell division site"/>
    <property type="evidence" value="ECO:0000318"/>
    <property type="project" value="GO_Central"/>
</dbReference>
<dbReference type="GO" id="GO:0005737">
    <property type="term" value="C:cytoplasm"/>
    <property type="evidence" value="ECO:0000318"/>
    <property type="project" value="GO_Central"/>
</dbReference>
<dbReference type="GO" id="GO:0005525">
    <property type="term" value="F:GTP binding"/>
    <property type="evidence" value="ECO:0000318"/>
    <property type="project" value="GO_Central"/>
</dbReference>
<dbReference type="GO" id="GO:0003924">
    <property type="term" value="F:GTPase activity"/>
    <property type="evidence" value="ECO:0000318"/>
    <property type="project" value="GO_Central"/>
</dbReference>
<dbReference type="GO" id="GO:0051301">
    <property type="term" value="P:cell division"/>
    <property type="evidence" value="ECO:0000318"/>
    <property type="project" value="GO_Central"/>
</dbReference>
<dbReference type="GO" id="GO:0000917">
    <property type="term" value="P:division septum assembly"/>
    <property type="evidence" value="ECO:0007669"/>
    <property type="project" value="UniProtKB-KW"/>
</dbReference>
<dbReference type="GO" id="GO:0043093">
    <property type="term" value="P:FtsZ-dependent cytokinesis"/>
    <property type="evidence" value="ECO:0007669"/>
    <property type="project" value="UniProtKB-UniRule"/>
</dbReference>
<dbReference type="GO" id="GO:0051258">
    <property type="term" value="P:protein polymerization"/>
    <property type="evidence" value="ECO:0007669"/>
    <property type="project" value="UniProtKB-UniRule"/>
</dbReference>
<dbReference type="CDD" id="cd02201">
    <property type="entry name" value="FtsZ_type1"/>
    <property type="match status" value="1"/>
</dbReference>
<dbReference type="FunFam" id="3.40.50.1440:FF:000001">
    <property type="entry name" value="Cell division protein FtsZ"/>
    <property type="match status" value="1"/>
</dbReference>
<dbReference type="Gene3D" id="3.30.1330.20">
    <property type="entry name" value="Tubulin/FtsZ, C-terminal domain"/>
    <property type="match status" value="1"/>
</dbReference>
<dbReference type="Gene3D" id="3.40.50.1440">
    <property type="entry name" value="Tubulin/FtsZ, GTPase domain"/>
    <property type="match status" value="1"/>
</dbReference>
<dbReference type="HAMAP" id="MF_00909">
    <property type="entry name" value="FtsZ"/>
    <property type="match status" value="1"/>
</dbReference>
<dbReference type="InterPro" id="IPR000158">
    <property type="entry name" value="Cell_div_FtsZ"/>
</dbReference>
<dbReference type="InterPro" id="IPR020805">
    <property type="entry name" value="Cell_div_FtsZ_CS"/>
</dbReference>
<dbReference type="InterPro" id="IPR045061">
    <property type="entry name" value="FtsZ/CetZ"/>
</dbReference>
<dbReference type="InterPro" id="IPR024757">
    <property type="entry name" value="FtsZ_C"/>
</dbReference>
<dbReference type="InterPro" id="IPR008280">
    <property type="entry name" value="Tub_FtsZ_C"/>
</dbReference>
<dbReference type="InterPro" id="IPR037103">
    <property type="entry name" value="Tubulin/FtsZ-like_C"/>
</dbReference>
<dbReference type="InterPro" id="IPR018316">
    <property type="entry name" value="Tubulin/FtsZ_2-layer-sand-dom"/>
</dbReference>
<dbReference type="InterPro" id="IPR036525">
    <property type="entry name" value="Tubulin/FtsZ_GTPase_sf"/>
</dbReference>
<dbReference type="InterPro" id="IPR003008">
    <property type="entry name" value="Tubulin_FtsZ_GTPase"/>
</dbReference>
<dbReference type="NCBIfam" id="TIGR00065">
    <property type="entry name" value="ftsZ"/>
    <property type="match status" value="1"/>
</dbReference>
<dbReference type="PANTHER" id="PTHR30314">
    <property type="entry name" value="CELL DIVISION PROTEIN FTSZ-RELATED"/>
    <property type="match status" value="1"/>
</dbReference>
<dbReference type="PANTHER" id="PTHR30314:SF3">
    <property type="entry name" value="MITOCHONDRIAL DIVISION PROTEIN FSZA"/>
    <property type="match status" value="1"/>
</dbReference>
<dbReference type="Pfam" id="PF12327">
    <property type="entry name" value="FtsZ_C"/>
    <property type="match status" value="1"/>
</dbReference>
<dbReference type="Pfam" id="PF00091">
    <property type="entry name" value="Tubulin"/>
    <property type="match status" value="1"/>
</dbReference>
<dbReference type="PRINTS" id="PR00423">
    <property type="entry name" value="CELLDVISFTSZ"/>
</dbReference>
<dbReference type="SMART" id="SM00864">
    <property type="entry name" value="Tubulin"/>
    <property type="match status" value="1"/>
</dbReference>
<dbReference type="SMART" id="SM00865">
    <property type="entry name" value="Tubulin_C"/>
    <property type="match status" value="1"/>
</dbReference>
<dbReference type="SUPFAM" id="SSF55307">
    <property type="entry name" value="Tubulin C-terminal domain-like"/>
    <property type="match status" value="1"/>
</dbReference>
<dbReference type="SUPFAM" id="SSF52490">
    <property type="entry name" value="Tubulin nucleotide-binding domain-like"/>
    <property type="match status" value="1"/>
</dbReference>
<dbReference type="PROSITE" id="PS01134">
    <property type="entry name" value="FTSZ_1"/>
    <property type="match status" value="1"/>
</dbReference>
<dbReference type="PROSITE" id="PS01135">
    <property type="entry name" value="FTSZ_2"/>
    <property type="match status" value="1"/>
</dbReference>
<feature type="chain" id="PRO_0000114391" description="Cell division protein FtsZ">
    <location>
        <begin position="1"/>
        <end position="351"/>
    </location>
</feature>
<feature type="binding site" evidence="1">
    <location>
        <begin position="31"/>
        <end position="35"/>
    </location>
    <ligand>
        <name>GTP</name>
        <dbReference type="ChEBI" id="CHEBI:37565"/>
    </ligand>
</feature>
<feature type="binding site" evidence="1">
    <location>
        <begin position="118"/>
        <end position="120"/>
    </location>
    <ligand>
        <name>GTP</name>
        <dbReference type="ChEBI" id="CHEBI:37565"/>
    </ligand>
</feature>
<feature type="binding site" evidence="1">
    <location>
        <position position="149"/>
    </location>
    <ligand>
        <name>GTP</name>
        <dbReference type="ChEBI" id="CHEBI:37565"/>
    </ligand>
</feature>
<feature type="binding site" evidence="1">
    <location>
        <position position="153"/>
    </location>
    <ligand>
        <name>GTP</name>
        <dbReference type="ChEBI" id="CHEBI:37565"/>
    </ligand>
</feature>
<feature type="binding site" evidence="1">
    <location>
        <position position="197"/>
    </location>
    <ligand>
        <name>GTP</name>
        <dbReference type="ChEBI" id="CHEBI:37565"/>
    </ligand>
</feature>
<feature type="sequence conflict" description="In Ref. 1; AAC24604." evidence="4" ref="1">
    <original>V</original>
    <variation>A</variation>
    <location>
        <position position="102"/>
    </location>
</feature>
<feature type="strand" evidence="5">
    <location>
        <begin position="24"/>
        <end position="29"/>
    </location>
</feature>
<feature type="helix" evidence="5">
    <location>
        <begin position="30"/>
        <end position="43"/>
    </location>
</feature>
<feature type="strand" evidence="5">
    <location>
        <begin position="48"/>
        <end position="55"/>
    </location>
</feature>
<feature type="helix" evidence="5">
    <location>
        <begin position="57"/>
        <end position="61"/>
    </location>
</feature>
<feature type="strand" evidence="5">
    <location>
        <begin position="66"/>
        <end position="70"/>
    </location>
</feature>
<feature type="turn" evidence="5">
    <location>
        <begin position="73"/>
        <end position="78"/>
    </location>
</feature>
<feature type="helix" evidence="5">
    <location>
        <begin position="85"/>
        <end position="94"/>
    </location>
</feature>
<feature type="helix" evidence="5">
    <location>
        <begin position="96"/>
        <end position="102"/>
    </location>
</feature>
<feature type="turn" evidence="5">
    <location>
        <begin position="103"/>
        <end position="105"/>
    </location>
</feature>
<feature type="strand" evidence="5">
    <location>
        <begin position="107"/>
        <end position="114"/>
    </location>
</feature>
<feature type="helix" evidence="5">
    <location>
        <begin position="119"/>
        <end position="133"/>
    </location>
</feature>
<feature type="strand" evidence="5">
    <location>
        <begin position="137"/>
        <end position="144"/>
    </location>
</feature>
<feature type="helix" evidence="5">
    <location>
        <begin position="147"/>
        <end position="149"/>
    </location>
</feature>
<feature type="helix" evidence="5">
    <location>
        <begin position="151"/>
        <end position="166"/>
    </location>
</feature>
<feature type="strand" evidence="5">
    <location>
        <begin position="169"/>
        <end position="175"/>
    </location>
</feature>
<feature type="helix" evidence="5">
    <location>
        <begin position="176"/>
        <end position="180"/>
    </location>
</feature>
<feature type="helix" evidence="5">
    <location>
        <begin position="189"/>
        <end position="212"/>
    </location>
</feature>
<feature type="helix" evidence="5">
    <location>
        <begin position="219"/>
        <end position="228"/>
    </location>
</feature>
<feature type="strand" evidence="5">
    <location>
        <begin position="232"/>
        <end position="243"/>
    </location>
</feature>
<feature type="helix" evidence="5">
    <location>
        <begin position="246"/>
        <end position="255"/>
    </location>
</feature>
<feature type="helix" evidence="5">
    <location>
        <begin position="264"/>
        <end position="266"/>
    </location>
</feature>
<feature type="strand" evidence="5">
    <location>
        <begin position="268"/>
        <end position="276"/>
    </location>
</feature>
<feature type="helix" evidence="5">
    <location>
        <begin position="282"/>
        <end position="293"/>
    </location>
</feature>
<feature type="strand" evidence="5">
    <location>
        <begin position="300"/>
        <end position="308"/>
    </location>
</feature>
<feature type="strand" evidence="5">
    <location>
        <begin position="316"/>
        <end position="324"/>
    </location>
</feature>
<feature type="helix" evidence="5">
    <location>
        <begin position="330"/>
        <end position="333"/>
    </location>
</feature>
<feature type="helix" evidence="6">
    <location>
        <begin position="341"/>
        <end position="344"/>
    </location>
</feature>
<feature type="helix" evidence="6">
    <location>
        <begin position="348"/>
        <end position="350"/>
    </location>
</feature>
<organism>
    <name type="scientific">Thermotoga maritima (strain ATCC 43589 / DSM 3109 / JCM 10099 / NBRC 100826 / MSB8)</name>
    <dbReference type="NCBI Taxonomy" id="243274"/>
    <lineage>
        <taxon>Bacteria</taxon>
        <taxon>Thermotogati</taxon>
        <taxon>Thermotogota</taxon>
        <taxon>Thermotogae</taxon>
        <taxon>Thermotogales</taxon>
        <taxon>Thermotogaceae</taxon>
        <taxon>Thermotoga</taxon>
    </lineage>
</organism>
<name>FTSZ_THEMA</name>
<reference key="1">
    <citation type="journal article" date="1998" name="Cell Motil. Cytoskeleton">
        <title>FtsZ from Escherichia coli, Azotobacter vinelandii, and Thermotoga maritima -- quantitation, GTP hydrolysis, and assembly.</title>
        <authorList>
            <person name="Lu C."/>
            <person name="Stricker J."/>
            <person name="Erickson H.P."/>
        </authorList>
    </citation>
    <scope>NUCLEOTIDE SEQUENCE [GENOMIC DNA]</scope>
    <scope>FUNCTION</scope>
    <scope>CHARACTERIZATION</scope>
</reference>
<reference key="2">
    <citation type="journal article" date="1999" name="Nature">
        <title>Evidence for lateral gene transfer between Archaea and Bacteria from genome sequence of Thermotoga maritima.</title>
        <authorList>
            <person name="Nelson K.E."/>
            <person name="Clayton R.A."/>
            <person name="Gill S.R."/>
            <person name="Gwinn M.L."/>
            <person name="Dodson R.J."/>
            <person name="Haft D.H."/>
            <person name="Hickey E.K."/>
            <person name="Peterson J.D."/>
            <person name="Nelson W.C."/>
            <person name="Ketchum K.A."/>
            <person name="McDonald L.A."/>
            <person name="Utterback T.R."/>
            <person name="Malek J.A."/>
            <person name="Linher K.D."/>
            <person name="Garrett M.M."/>
            <person name="Stewart A.M."/>
            <person name="Cotton M.D."/>
            <person name="Pratt M.S."/>
            <person name="Phillips C.A."/>
            <person name="Richardson D.L."/>
            <person name="Heidelberg J.F."/>
            <person name="Sutton G.G."/>
            <person name="Fleischmann R.D."/>
            <person name="Eisen J.A."/>
            <person name="White O."/>
            <person name="Salzberg S.L."/>
            <person name="Smith H.O."/>
            <person name="Venter J.C."/>
            <person name="Fraser C.M."/>
        </authorList>
    </citation>
    <scope>NUCLEOTIDE SEQUENCE [LARGE SCALE GENOMIC DNA]</scope>
    <source>
        <strain>ATCC 43589 / DSM 3109 / JCM 10099 / NBRC 100826 / MSB8</strain>
    </source>
</reference>
<reference key="3">
    <citation type="journal article" date="2004" name="Nat. Struct. Mol. Biol.">
        <title>Structural insights into FtsZ protofilament formation.</title>
        <authorList>
            <person name="Oliva M.A."/>
            <person name="Cordell S.C."/>
            <person name="Lowe J."/>
        </authorList>
    </citation>
    <scope>X-RAY CRYSTALLOGRAPHY (2.0 ANGSTROMS)</scope>
</reference>
<reference key="4">
    <citation type="journal article" date="2012" name="EMBO J.">
        <title>FtsA forms actin-like protofilaments.</title>
        <authorList>
            <person name="Szwedziak P."/>
            <person name="Wang Q."/>
            <person name="Freund S.M."/>
            <person name="Lowe J."/>
        </authorList>
    </citation>
    <scope>X-RAY CRYSTALLOGRAPHY (1.80 ANGSTROMS) OF 336-351 IN COMPLEX WITH FTSA</scope>
</reference>
<evidence type="ECO:0000255" key="1">
    <source>
        <dbReference type="HAMAP-Rule" id="MF_00909"/>
    </source>
</evidence>
<evidence type="ECO:0000269" key="2">
    <source>
    </source>
</evidence>
<evidence type="ECO:0000269" key="3">
    <source>
    </source>
</evidence>
<evidence type="ECO:0000305" key="4"/>
<evidence type="ECO:0007829" key="5">
    <source>
        <dbReference type="PDB" id="1W5F"/>
    </source>
</evidence>
<evidence type="ECO:0007829" key="6">
    <source>
        <dbReference type="PDB" id="4A2A"/>
    </source>
</evidence>
<keyword id="KW-0002">3D-structure</keyword>
<keyword id="KW-0131">Cell cycle</keyword>
<keyword id="KW-0132">Cell division</keyword>
<keyword id="KW-0963">Cytoplasm</keyword>
<keyword id="KW-0342">GTP-binding</keyword>
<keyword id="KW-0547">Nucleotide-binding</keyword>
<keyword id="KW-1185">Reference proteome</keyword>
<keyword id="KW-0717">Septation</keyword>
<proteinExistence type="evidence at protein level"/>
<protein>
    <recommendedName>
        <fullName evidence="1">Cell division protein FtsZ</fullName>
    </recommendedName>
</protein>